<organism>
    <name type="scientific">Macaca nemestrina</name>
    <name type="common">Pig-tailed macaque</name>
    <dbReference type="NCBI Taxonomy" id="9545"/>
    <lineage>
        <taxon>Eukaryota</taxon>
        <taxon>Metazoa</taxon>
        <taxon>Chordata</taxon>
        <taxon>Craniata</taxon>
        <taxon>Vertebrata</taxon>
        <taxon>Euteleostomi</taxon>
        <taxon>Mammalia</taxon>
        <taxon>Eutheria</taxon>
        <taxon>Euarchontoglires</taxon>
        <taxon>Primates</taxon>
        <taxon>Haplorrhini</taxon>
        <taxon>Catarrhini</taxon>
        <taxon>Cercopithecidae</taxon>
        <taxon>Cercopithecinae</taxon>
        <taxon>Macaca</taxon>
    </lineage>
</organism>
<accession>Q5FB30</accession>
<gene>
    <name type="primary">SOD2</name>
</gene>
<evidence type="ECO:0000250" key="1"/>
<evidence type="ECO:0000250" key="2">
    <source>
        <dbReference type="UniProtKB" id="P04179"/>
    </source>
</evidence>
<evidence type="ECO:0000250" key="3">
    <source>
        <dbReference type="UniProtKB" id="P07895"/>
    </source>
</evidence>
<evidence type="ECO:0000250" key="4">
    <source>
        <dbReference type="UniProtKB" id="P09671"/>
    </source>
</evidence>
<evidence type="ECO:0000305" key="5"/>
<sequence>MLSRAVCGTGRQLAPALGYLGSRQKHSLPDLPYDYGALEPHINAQIMQLHHSKHHAAYVNNLNVTEEKYQEALAKGDVTAQIALQPALKFNGGGHINHSIFWTNLSPNGGGEPKGELLEAIKRDFGSFEKYKEKLTAASVGVQGSGWGWLGFNKERGQLQIAACLNQDPLQGTTGLIPLLGIDVWEHAYYLQYKNVRPDYLKAIWNVINWENVTERYMACKK</sequence>
<reference key="1">
    <citation type="submission" date="2005-02" db="EMBL/GenBank/DDBJ databases">
        <title>Mammalian superoxide dismutase.</title>
        <authorList>
            <person name="Fukuhara R."/>
            <person name="Kageyama T."/>
        </authorList>
    </citation>
    <scope>NUCLEOTIDE SEQUENCE [MRNA]</scope>
</reference>
<name>SODM_MACNE</name>
<keyword id="KW-0007">Acetylation</keyword>
<keyword id="KW-0464">Manganese</keyword>
<keyword id="KW-0479">Metal-binding</keyword>
<keyword id="KW-0496">Mitochondrion</keyword>
<keyword id="KW-0944">Nitration</keyword>
<keyword id="KW-0560">Oxidoreductase</keyword>
<keyword id="KW-1185">Reference proteome</keyword>
<keyword id="KW-0809">Transit peptide</keyword>
<keyword id="KW-0832">Ubl conjugation</keyword>
<dbReference type="EC" id="1.15.1.1"/>
<dbReference type="EMBL" id="AB201468">
    <property type="protein sequence ID" value="BAD89542.1"/>
    <property type="molecule type" value="mRNA"/>
</dbReference>
<dbReference type="RefSeq" id="NP_001292828.1">
    <property type="nucleotide sequence ID" value="NM_001305899.1"/>
</dbReference>
<dbReference type="SMR" id="Q5FB30"/>
<dbReference type="STRING" id="9545.ENSMNEP00000015276"/>
<dbReference type="GeneID" id="105492026"/>
<dbReference type="KEGG" id="mni:105492026"/>
<dbReference type="CTD" id="6648"/>
<dbReference type="Proteomes" id="UP000233120">
    <property type="component" value="Unassembled WGS sequence"/>
</dbReference>
<dbReference type="GO" id="GO:0005759">
    <property type="term" value="C:mitochondrial matrix"/>
    <property type="evidence" value="ECO:0007669"/>
    <property type="project" value="UniProtKB-SubCell"/>
</dbReference>
<dbReference type="GO" id="GO:0030145">
    <property type="term" value="F:manganese ion binding"/>
    <property type="evidence" value="ECO:0000250"/>
    <property type="project" value="UniProtKB"/>
</dbReference>
<dbReference type="GO" id="GO:0004784">
    <property type="term" value="F:superoxide dismutase activity"/>
    <property type="evidence" value="ECO:0000250"/>
    <property type="project" value="UniProtKB"/>
</dbReference>
<dbReference type="FunFam" id="1.10.287.990:FF:000001">
    <property type="entry name" value="Superoxide dismutase"/>
    <property type="match status" value="1"/>
</dbReference>
<dbReference type="FunFam" id="3.55.40.20:FF:000003">
    <property type="entry name" value="Superoxide dismutase [Mn], mitochondrial"/>
    <property type="match status" value="1"/>
</dbReference>
<dbReference type="Gene3D" id="1.10.287.990">
    <property type="entry name" value="Fe,Mn superoxide dismutase (SOD) domain"/>
    <property type="match status" value="1"/>
</dbReference>
<dbReference type="Gene3D" id="3.55.40.20">
    <property type="entry name" value="Iron/manganese superoxide dismutase, C-terminal domain"/>
    <property type="match status" value="1"/>
</dbReference>
<dbReference type="InterPro" id="IPR050265">
    <property type="entry name" value="Fe/Mn_Superoxide_Dismutase"/>
</dbReference>
<dbReference type="InterPro" id="IPR001189">
    <property type="entry name" value="Mn/Fe_SOD"/>
</dbReference>
<dbReference type="InterPro" id="IPR019833">
    <property type="entry name" value="Mn/Fe_SOD_BS"/>
</dbReference>
<dbReference type="InterPro" id="IPR019832">
    <property type="entry name" value="Mn/Fe_SOD_C"/>
</dbReference>
<dbReference type="InterPro" id="IPR019831">
    <property type="entry name" value="Mn/Fe_SOD_N"/>
</dbReference>
<dbReference type="InterPro" id="IPR036324">
    <property type="entry name" value="Mn/Fe_SOD_N_sf"/>
</dbReference>
<dbReference type="InterPro" id="IPR036314">
    <property type="entry name" value="SOD_C_sf"/>
</dbReference>
<dbReference type="PANTHER" id="PTHR11404">
    <property type="entry name" value="SUPEROXIDE DISMUTASE 2"/>
    <property type="match status" value="1"/>
</dbReference>
<dbReference type="PANTHER" id="PTHR11404:SF6">
    <property type="entry name" value="SUPEROXIDE DISMUTASE [MN], MITOCHONDRIAL"/>
    <property type="match status" value="1"/>
</dbReference>
<dbReference type="Pfam" id="PF02777">
    <property type="entry name" value="Sod_Fe_C"/>
    <property type="match status" value="1"/>
</dbReference>
<dbReference type="Pfam" id="PF00081">
    <property type="entry name" value="Sod_Fe_N"/>
    <property type="match status" value="1"/>
</dbReference>
<dbReference type="PIRSF" id="PIRSF000349">
    <property type="entry name" value="SODismutase"/>
    <property type="match status" value="1"/>
</dbReference>
<dbReference type="PRINTS" id="PR01703">
    <property type="entry name" value="MNSODISMTASE"/>
</dbReference>
<dbReference type="SUPFAM" id="SSF54719">
    <property type="entry name" value="Fe,Mn superoxide dismutase (SOD), C-terminal domain"/>
    <property type="match status" value="1"/>
</dbReference>
<dbReference type="SUPFAM" id="SSF46609">
    <property type="entry name" value="Fe,Mn superoxide dismutase (SOD), N-terminal domain"/>
    <property type="match status" value="1"/>
</dbReference>
<dbReference type="PROSITE" id="PS00088">
    <property type="entry name" value="SOD_MN"/>
    <property type="match status" value="1"/>
</dbReference>
<protein>
    <recommendedName>
        <fullName>Superoxide dismutase [Mn], mitochondrial</fullName>
        <ecNumber>1.15.1.1</ecNumber>
    </recommendedName>
</protein>
<feature type="transit peptide" description="Mitochondrion" evidence="1">
    <location>
        <begin position="1"/>
        <end position="24"/>
    </location>
</feature>
<feature type="chain" id="PRO_0000032870" description="Superoxide dismutase [Mn], mitochondrial">
    <location>
        <begin position="25"/>
        <end position="222"/>
    </location>
</feature>
<feature type="binding site" evidence="1">
    <location>
        <position position="50"/>
    </location>
    <ligand>
        <name>Mn(2+)</name>
        <dbReference type="ChEBI" id="CHEBI:29035"/>
    </ligand>
</feature>
<feature type="binding site" evidence="1">
    <location>
        <position position="98"/>
    </location>
    <ligand>
        <name>Mn(2+)</name>
        <dbReference type="ChEBI" id="CHEBI:29035"/>
    </ligand>
</feature>
<feature type="binding site" evidence="1">
    <location>
        <position position="183"/>
    </location>
    <ligand>
        <name>Mn(2+)</name>
        <dbReference type="ChEBI" id="CHEBI:29035"/>
    </ligand>
</feature>
<feature type="binding site" evidence="1">
    <location>
        <position position="187"/>
    </location>
    <ligand>
        <name>Mn(2+)</name>
        <dbReference type="ChEBI" id="CHEBI:29035"/>
    </ligand>
</feature>
<feature type="modified residue" description="3'-nitrotyrosine" evidence="2">
    <location>
        <position position="58"/>
    </location>
</feature>
<feature type="modified residue" description="N6-acetyllysine; alternate" evidence="2">
    <location>
        <position position="68"/>
    </location>
</feature>
<feature type="modified residue" description="N6-succinyllysine; alternate" evidence="4">
    <location>
        <position position="68"/>
    </location>
</feature>
<feature type="modified residue" description="N6-acetyllysine; alternate" evidence="4">
    <location>
        <position position="75"/>
    </location>
</feature>
<feature type="modified residue" description="N6-succinyllysine; alternate" evidence="4">
    <location>
        <position position="75"/>
    </location>
</feature>
<feature type="modified residue" description="N6-acetyllysine" evidence="4">
    <location>
        <position position="114"/>
    </location>
</feature>
<feature type="modified residue" description="N6-acetyllysine; alternate" evidence="4">
    <location>
        <position position="122"/>
    </location>
</feature>
<feature type="modified residue" description="N6-succinyllysine; alternate" evidence="4">
    <location>
        <position position="122"/>
    </location>
</feature>
<feature type="modified residue" description="N6-acetyllysine; alternate" evidence="2">
    <location>
        <position position="130"/>
    </location>
</feature>
<feature type="modified residue" description="N6-succinyllysine; alternate" evidence="4">
    <location>
        <position position="130"/>
    </location>
</feature>
<feature type="modified residue" description="N6-acetyllysine" evidence="4">
    <location>
        <position position="202"/>
    </location>
</feature>
<proteinExistence type="evidence at transcript level"/>
<comment type="function">
    <text evidence="3">Destroys superoxide anion radicals which are normally produced within the cells and which are toxic to biological systems.</text>
</comment>
<comment type="catalytic activity">
    <reaction>
        <text>2 superoxide + 2 H(+) = H2O2 + O2</text>
        <dbReference type="Rhea" id="RHEA:20696"/>
        <dbReference type="ChEBI" id="CHEBI:15378"/>
        <dbReference type="ChEBI" id="CHEBI:15379"/>
        <dbReference type="ChEBI" id="CHEBI:16240"/>
        <dbReference type="ChEBI" id="CHEBI:18421"/>
        <dbReference type="EC" id="1.15.1.1"/>
    </reaction>
</comment>
<comment type="cofactor">
    <cofactor evidence="2">
        <name>Mn(2+)</name>
        <dbReference type="ChEBI" id="CHEBI:29035"/>
    </cofactor>
    <text evidence="2">Binds 1 Mn(2+) ion per subunit.</text>
</comment>
<comment type="subunit">
    <text evidence="1">Homotetramer.</text>
</comment>
<comment type="subcellular location">
    <subcellularLocation>
        <location evidence="1">Mitochondrion matrix</location>
    </subcellularLocation>
</comment>
<comment type="PTM">
    <text evidence="3">Nitrated under oxidative stress. Nitration coupled with oxidation inhibits the catalytic activity.</text>
</comment>
<comment type="PTM">
    <text evidence="2">Acetylation at Lys-122 decreases enzymatic activity. Deacetylated by SIRT3 upon exposure to ionizing radiations or after long fasting (By similarity).</text>
</comment>
<comment type="PTM">
    <text evidence="2">Polyubiquitinated; leading to proteasomal degradation. Deubiquitinated by USP36 which increases protein stability.</text>
</comment>
<comment type="similarity">
    <text evidence="5">Belongs to the iron/manganese superoxide dismutase family.</text>
</comment>